<proteinExistence type="inferred from homology"/>
<gene>
    <name evidence="1" type="primary">glgB</name>
    <name type="ordered locus">H16_B1559</name>
</gene>
<name>GLGB_CUPNH</name>
<protein>
    <recommendedName>
        <fullName evidence="1">1,4-alpha-glucan branching enzyme GlgB</fullName>
        <ecNumber evidence="1">2.4.1.18</ecNumber>
    </recommendedName>
    <alternativeName>
        <fullName evidence="1">1,4-alpha-D-glucan:1,4-alpha-D-glucan 6-glucosyl-transferase</fullName>
    </alternativeName>
    <alternativeName>
        <fullName evidence="1">Alpha-(1-&gt;4)-glucan branching enzyme</fullName>
    </alternativeName>
    <alternativeName>
        <fullName evidence="1">Glycogen branching enzyme</fullName>
        <shortName evidence="1">BE</shortName>
    </alternativeName>
</protein>
<organism>
    <name type="scientific">Cupriavidus necator (strain ATCC 17699 / DSM 428 / KCTC 22496 / NCIMB 10442 / H16 / Stanier 337)</name>
    <name type="common">Ralstonia eutropha</name>
    <dbReference type="NCBI Taxonomy" id="381666"/>
    <lineage>
        <taxon>Bacteria</taxon>
        <taxon>Pseudomonadati</taxon>
        <taxon>Pseudomonadota</taxon>
        <taxon>Betaproteobacteria</taxon>
        <taxon>Burkholderiales</taxon>
        <taxon>Burkholderiaceae</taxon>
        <taxon>Cupriavidus</taxon>
    </lineage>
</organism>
<evidence type="ECO:0000255" key="1">
    <source>
        <dbReference type="HAMAP-Rule" id="MF_00685"/>
    </source>
</evidence>
<feature type="chain" id="PRO_1000044994" description="1,4-alpha-glucan branching enzyme GlgB">
    <location>
        <begin position="1"/>
        <end position="756"/>
    </location>
</feature>
<feature type="active site" description="Nucleophile" evidence="1">
    <location>
        <position position="425"/>
    </location>
</feature>
<feature type="active site" description="Proton donor" evidence="1">
    <location>
        <position position="478"/>
    </location>
</feature>
<dbReference type="EC" id="2.4.1.18" evidence="1"/>
<dbReference type="EMBL" id="AM260480">
    <property type="protein sequence ID" value="CAJ96346.1"/>
    <property type="molecule type" value="Genomic_DNA"/>
</dbReference>
<dbReference type="RefSeq" id="WP_010814545.1">
    <property type="nucleotide sequence ID" value="NZ_CP039288.1"/>
</dbReference>
<dbReference type="SMR" id="Q0K0X8"/>
<dbReference type="STRING" id="381666.H16_B1559"/>
<dbReference type="CAZy" id="CBM48">
    <property type="family name" value="Carbohydrate-Binding Module Family 48"/>
</dbReference>
<dbReference type="CAZy" id="GH13">
    <property type="family name" value="Glycoside Hydrolase Family 13"/>
</dbReference>
<dbReference type="KEGG" id="reh:H16_B1559"/>
<dbReference type="eggNOG" id="COG0296">
    <property type="taxonomic scope" value="Bacteria"/>
</dbReference>
<dbReference type="HOGENOM" id="CLU_004245_3_2_4"/>
<dbReference type="OrthoDB" id="9800174at2"/>
<dbReference type="UniPathway" id="UPA00164"/>
<dbReference type="Proteomes" id="UP000008210">
    <property type="component" value="Chromosome 2"/>
</dbReference>
<dbReference type="GO" id="GO:0005829">
    <property type="term" value="C:cytosol"/>
    <property type="evidence" value="ECO:0007669"/>
    <property type="project" value="TreeGrafter"/>
</dbReference>
<dbReference type="GO" id="GO:0003844">
    <property type="term" value="F:1,4-alpha-glucan branching enzyme activity"/>
    <property type="evidence" value="ECO:0007669"/>
    <property type="project" value="UniProtKB-UniRule"/>
</dbReference>
<dbReference type="GO" id="GO:0043169">
    <property type="term" value="F:cation binding"/>
    <property type="evidence" value="ECO:0007669"/>
    <property type="project" value="InterPro"/>
</dbReference>
<dbReference type="GO" id="GO:0004553">
    <property type="term" value="F:hydrolase activity, hydrolyzing O-glycosyl compounds"/>
    <property type="evidence" value="ECO:0007669"/>
    <property type="project" value="InterPro"/>
</dbReference>
<dbReference type="GO" id="GO:0005978">
    <property type="term" value="P:glycogen biosynthetic process"/>
    <property type="evidence" value="ECO:0007669"/>
    <property type="project" value="UniProtKB-UniRule"/>
</dbReference>
<dbReference type="CDD" id="cd11322">
    <property type="entry name" value="AmyAc_Glg_BE"/>
    <property type="match status" value="1"/>
</dbReference>
<dbReference type="CDD" id="cd02855">
    <property type="entry name" value="E_set_GBE_prok_N"/>
    <property type="match status" value="1"/>
</dbReference>
<dbReference type="FunFam" id="2.60.40.10:FF:000169">
    <property type="entry name" value="1,4-alpha-glucan branching enzyme GlgB"/>
    <property type="match status" value="1"/>
</dbReference>
<dbReference type="FunFam" id="2.60.40.1180:FF:000002">
    <property type="entry name" value="1,4-alpha-glucan branching enzyme GlgB"/>
    <property type="match status" value="1"/>
</dbReference>
<dbReference type="FunFam" id="3.20.20.80:FF:000003">
    <property type="entry name" value="1,4-alpha-glucan branching enzyme GlgB"/>
    <property type="match status" value="1"/>
</dbReference>
<dbReference type="Gene3D" id="3.20.20.80">
    <property type="entry name" value="Glycosidases"/>
    <property type="match status" value="1"/>
</dbReference>
<dbReference type="Gene3D" id="2.60.40.1180">
    <property type="entry name" value="Golgi alpha-mannosidase II"/>
    <property type="match status" value="1"/>
</dbReference>
<dbReference type="Gene3D" id="2.60.40.10">
    <property type="entry name" value="Immunoglobulins"/>
    <property type="match status" value="2"/>
</dbReference>
<dbReference type="HAMAP" id="MF_00685">
    <property type="entry name" value="GlgB"/>
    <property type="match status" value="1"/>
</dbReference>
<dbReference type="InterPro" id="IPR006048">
    <property type="entry name" value="A-amylase/branching_C"/>
</dbReference>
<dbReference type="InterPro" id="IPR037439">
    <property type="entry name" value="Branching_enzy"/>
</dbReference>
<dbReference type="InterPro" id="IPR006407">
    <property type="entry name" value="GlgB"/>
</dbReference>
<dbReference type="InterPro" id="IPR054169">
    <property type="entry name" value="GlgB_N"/>
</dbReference>
<dbReference type="InterPro" id="IPR044143">
    <property type="entry name" value="GlgB_N_E_set_prok"/>
</dbReference>
<dbReference type="InterPro" id="IPR006047">
    <property type="entry name" value="Glyco_hydro_13_cat_dom"/>
</dbReference>
<dbReference type="InterPro" id="IPR004193">
    <property type="entry name" value="Glyco_hydro_13_N"/>
</dbReference>
<dbReference type="InterPro" id="IPR013780">
    <property type="entry name" value="Glyco_hydro_b"/>
</dbReference>
<dbReference type="InterPro" id="IPR017853">
    <property type="entry name" value="Glycoside_hydrolase_SF"/>
</dbReference>
<dbReference type="InterPro" id="IPR013783">
    <property type="entry name" value="Ig-like_fold"/>
</dbReference>
<dbReference type="InterPro" id="IPR014756">
    <property type="entry name" value="Ig_E-set"/>
</dbReference>
<dbReference type="NCBIfam" id="TIGR01515">
    <property type="entry name" value="branching_enzym"/>
    <property type="match status" value="1"/>
</dbReference>
<dbReference type="NCBIfam" id="NF003811">
    <property type="entry name" value="PRK05402.1"/>
    <property type="match status" value="1"/>
</dbReference>
<dbReference type="NCBIfam" id="NF008967">
    <property type="entry name" value="PRK12313.1"/>
    <property type="match status" value="1"/>
</dbReference>
<dbReference type="PANTHER" id="PTHR43651">
    <property type="entry name" value="1,4-ALPHA-GLUCAN-BRANCHING ENZYME"/>
    <property type="match status" value="1"/>
</dbReference>
<dbReference type="PANTHER" id="PTHR43651:SF3">
    <property type="entry name" value="1,4-ALPHA-GLUCAN-BRANCHING ENZYME"/>
    <property type="match status" value="1"/>
</dbReference>
<dbReference type="Pfam" id="PF00128">
    <property type="entry name" value="Alpha-amylase"/>
    <property type="match status" value="1"/>
</dbReference>
<dbReference type="Pfam" id="PF02806">
    <property type="entry name" value="Alpha-amylase_C"/>
    <property type="match status" value="1"/>
</dbReference>
<dbReference type="Pfam" id="PF02922">
    <property type="entry name" value="CBM_48"/>
    <property type="match status" value="1"/>
</dbReference>
<dbReference type="Pfam" id="PF22019">
    <property type="entry name" value="GlgB_N"/>
    <property type="match status" value="1"/>
</dbReference>
<dbReference type="PIRSF" id="PIRSF000463">
    <property type="entry name" value="GlgB"/>
    <property type="match status" value="1"/>
</dbReference>
<dbReference type="SMART" id="SM00642">
    <property type="entry name" value="Aamy"/>
    <property type="match status" value="1"/>
</dbReference>
<dbReference type="SUPFAM" id="SSF51445">
    <property type="entry name" value="(Trans)glycosidases"/>
    <property type="match status" value="1"/>
</dbReference>
<dbReference type="SUPFAM" id="SSF81296">
    <property type="entry name" value="E set domains"/>
    <property type="match status" value="2"/>
</dbReference>
<dbReference type="SUPFAM" id="SSF51011">
    <property type="entry name" value="Glycosyl hydrolase domain"/>
    <property type="match status" value="1"/>
</dbReference>
<keyword id="KW-0119">Carbohydrate metabolism</keyword>
<keyword id="KW-0320">Glycogen biosynthesis</keyword>
<keyword id="KW-0321">Glycogen metabolism</keyword>
<keyword id="KW-0328">Glycosyltransferase</keyword>
<keyword id="KW-1185">Reference proteome</keyword>
<keyword id="KW-0808">Transferase</keyword>
<reference key="1">
    <citation type="journal article" date="2006" name="Nat. Biotechnol.">
        <title>Genome sequence of the bioplastic-producing 'Knallgas' bacterium Ralstonia eutropha H16.</title>
        <authorList>
            <person name="Pohlmann A."/>
            <person name="Fricke W.F."/>
            <person name="Reinecke F."/>
            <person name="Kusian B."/>
            <person name="Liesegang H."/>
            <person name="Cramm R."/>
            <person name="Eitinger T."/>
            <person name="Ewering C."/>
            <person name="Poetter M."/>
            <person name="Schwartz E."/>
            <person name="Strittmatter A."/>
            <person name="Voss I."/>
            <person name="Gottschalk G."/>
            <person name="Steinbuechel A."/>
            <person name="Friedrich B."/>
            <person name="Bowien B."/>
        </authorList>
    </citation>
    <scope>NUCLEOTIDE SEQUENCE [LARGE SCALE GENOMIC DNA]</scope>
    <source>
        <strain>ATCC 17699 / DSM 428 / KCTC 22496 / NCIMB 10442 / H16 / Stanier 337</strain>
    </source>
</reference>
<accession>Q0K0X8</accession>
<sequence length="756" mass="83098">MTPAHGTQPGMLPGHEFEALLGARHHDPFAVLGPHPDGDGTLVRACLPGAASVQLTDAGGTPLAEMARLHGGGVFAARLPREYKGGAPDYRLRVQWSDGSGQCGADPYAFGLLLGELDLHLIAEGRHFELGACLGAQWQRVDGIDGVRFAVWAPNARRVSVIADFNGWHPARHPMRLRHPSGIWELFIPAALGAQPGSRYKYDLLDPHGTELPDKADPLALATEAPPATASVVAGPGQGAPPFAWHDADWMARRGGADPYAAPMSVYEVHALSWLRAANDTQRGWEILAERLVPYVQELGFTHIELLPITEHPFGGSWGYQPLSLYAPTARLGPPQAFAAFIDRCHQAGIGVLLDWVPAHFPTDPHGLARFDGTALYEHEDPREGFHQDWNTLIYNLGRNEVRGFLLAGALHWLEHFHADGLRVDAVASMLYRDYSREPGQWVPNRFGGRENLEAIDFLRELNAVVHERCPGALTIAEESTAWPGVTASVASGGLGFDFKWNMGWMHDTLHYLGHEPVHRAWHHQDMTFGLVYAWSEAFVLPLSHDEVVHGKASMIGKVPGDEWQRFAGLRAYYGFMWAHPGKKLLFMGGELAQWQEWNHDAELDWALLDHPMHRGMHTLVRDLNRLYRELPALHALDHRPEGFQWVVGDDNHNSVFAWLRRAGPYSREVVLVVVNMTPVPRYGYRLGVPYAGAWQECLNTDAAVYGGTNVGNSGAVAAVDVPSHGQPASLALTLPPLATLVLRFDPGGGIQGAST</sequence>
<comment type="function">
    <text evidence="1">Catalyzes the formation of the alpha-1,6-glucosidic linkages in glycogen by scission of a 1,4-alpha-linked oligosaccharide from growing alpha-1,4-glucan chains and the subsequent attachment of the oligosaccharide to the alpha-1,6 position.</text>
</comment>
<comment type="catalytic activity">
    <reaction evidence="1">
        <text>Transfers a segment of a (1-&gt;4)-alpha-D-glucan chain to a primary hydroxy group in a similar glucan chain.</text>
        <dbReference type="EC" id="2.4.1.18"/>
    </reaction>
</comment>
<comment type="pathway">
    <text evidence="1">Glycan biosynthesis; glycogen biosynthesis.</text>
</comment>
<comment type="subunit">
    <text evidence="1">Monomer.</text>
</comment>
<comment type="similarity">
    <text evidence="1">Belongs to the glycosyl hydrolase 13 family. GlgB subfamily.</text>
</comment>